<evidence type="ECO:0000255" key="1">
    <source>
        <dbReference type="HAMAP-Rule" id="MF_01690"/>
    </source>
</evidence>
<protein>
    <recommendedName>
        <fullName evidence="1">Succinyl-diaminopimelate desuccinylase</fullName>
        <shortName evidence="1">SDAP desuccinylase</shortName>
        <ecNumber evidence="1">3.5.1.18</ecNumber>
    </recommendedName>
    <alternativeName>
        <fullName evidence="1">N-succinyl-LL-2,6-diaminoheptanedioate amidohydrolase</fullName>
    </alternativeName>
</protein>
<dbReference type="EC" id="3.5.1.18" evidence="1"/>
<dbReference type="EMBL" id="CP001217">
    <property type="protein sequence ID" value="ACJ07372.1"/>
    <property type="molecule type" value="Genomic_DNA"/>
</dbReference>
<dbReference type="SMR" id="B6JKE4"/>
<dbReference type="KEGG" id="hpp:HPP12_0213"/>
<dbReference type="HOGENOM" id="CLU_021802_4_0_7"/>
<dbReference type="UniPathway" id="UPA00034">
    <property type="reaction ID" value="UER00021"/>
</dbReference>
<dbReference type="Proteomes" id="UP000008198">
    <property type="component" value="Chromosome"/>
</dbReference>
<dbReference type="GO" id="GO:0008777">
    <property type="term" value="F:acetylornithine deacetylase activity"/>
    <property type="evidence" value="ECO:0007669"/>
    <property type="project" value="TreeGrafter"/>
</dbReference>
<dbReference type="GO" id="GO:0046872">
    <property type="term" value="F:metal ion binding"/>
    <property type="evidence" value="ECO:0007669"/>
    <property type="project" value="UniProtKB-KW"/>
</dbReference>
<dbReference type="GO" id="GO:0009014">
    <property type="term" value="F:succinyl-diaminopimelate desuccinylase activity"/>
    <property type="evidence" value="ECO:0007669"/>
    <property type="project" value="UniProtKB-EC"/>
</dbReference>
<dbReference type="GO" id="GO:0019877">
    <property type="term" value="P:diaminopimelate biosynthetic process"/>
    <property type="evidence" value="ECO:0007669"/>
    <property type="project" value="UniProtKB-KW"/>
</dbReference>
<dbReference type="GO" id="GO:0006526">
    <property type="term" value="P:L-arginine biosynthetic process"/>
    <property type="evidence" value="ECO:0007669"/>
    <property type="project" value="TreeGrafter"/>
</dbReference>
<dbReference type="GO" id="GO:0009089">
    <property type="term" value="P:lysine biosynthetic process via diaminopimelate"/>
    <property type="evidence" value="ECO:0007669"/>
    <property type="project" value="UniProtKB-UniPathway"/>
</dbReference>
<dbReference type="CDD" id="cd03891">
    <property type="entry name" value="M20_DapE_proteobac"/>
    <property type="match status" value="1"/>
</dbReference>
<dbReference type="FunFam" id="3.30.70.360:FF:000011">
    <property type="entry name" value="Succinyl-diaminopimelate desuccinylase"/>
    <property type="match status" value="1"/>
</dbReference>
<dbReference type="FunFam" id="3.40.630.10:FF:000126">
    <property type="entry name" value="Succinyl-diaminopimelate desuccinylase"/>
    <property type="match status" value="1"/>
</dbReference>
<dbReference type="Gene3D" id="3.40.630.10">
    <property type="entry name" value="Zn peptidases"/>
    <property type="match status" value="2"/>
</dbReference>
<dbReference type="HAMAP" id="MF_01690">
    <property type="entry name" value="DapE"/>
    <property type="match status" value="1"/>
</dbReference>
<dbReference type="InterPro" id="IPR001261">
    <property type="entry name" value="ArgE/DapE_CS"/>
</dbReference>
<dbReference type="InterPro" id="IPR036264">
    <property type="entry name" value="Bact_exopeptidase_dim_dom"/>
</dbReference>
<dbReference type="InterPro" id="IPR005941">
    <property type="entry name" value="DapE_proteobac"/>
</dbReference>
<dbReference type="InterPro" id="IPR002933">
    <property type="entry name" value="Peptidase_M20"/>
</dbReference>
<dbReference type="InterPro" id="IPR011650">
    <property type="entry name" value="Peptidase_M20_dimer"/>
</dbReference>
<dbReference type="InterPro" id="IPR050072">
    <property type="entry name" value="Peptidase_M20A"/>
</dbReference>
<dbReference type="NCBIfam" id="TIGR01246">
    <property type="entry name" value="dapE_proteo"/>
    <property type="match status" value="1"/>
</dbReference>
<dbReference type="NCBIfam" id="NF009557">
    <property type="entry name" value="PRK13009.1"/>
    <property type="match status" value="1"/>
</dbReference>
<dbReference type="PANTHER" id="PTHR43808">
    <property type="entry name" value="ACETYLORNITHINE DEACETYLASE"/>
    <property type="match status" value="1"/>
</dbReference>
<dbReference type="PANTHER" id="PTHR43808:SF31">
    <property type="entry name" value="N-ACETYL-L-CITRULLINE DEACETYLASE"/>
    <property type="match status" value="1"/>
</dbReference>
<dbReference type="Pfam" id="PF07687">
    <property type="entry name" value="M20_dimer"/>
    <property type="match status" value="1"/>
</dbReference>
<dbReference type="Pfam" id="PF01546">
    <property type="entry name" value="Peptidase_M20"/>
    <property type="match status" value="1"/>
</dbReference>
<dbReference type="SUPFAM" id="SSF55031">
    <property type="entry name" value="Bacterial exopeptidase dimerisation domain"/>
    <property type="match status" value="1"/>
</dbReference>
<dbReference type="SUPFAM" id="SSF53187">
    <property type="entry name" value="Zn-dependent exopeptidases"/>
    <property type="match status" value="1"/>
</dbReference>
<dbReference type="PROSITE" id="PS00759">
    <property type="entry name" value="ARGE_DAPE_CPG2_2"/>
    <property type="match status" value="1"/>
</dbReference>
<name>DAPE_HELP2</name>
<reference key="1">
    <citation type="submission" date="2008-10" db="EMBL/GenBank/DDBJ databases">
        <title>The complete genome sequence of Helicobacter pylori strain P12.</title>
        <authorList>
            <person name="Fischer W."/>
            <person name="Windhager L."/>
            <person name="Karnholz A."/>
            <person name="Zeiller M."/>
            <person name="Zimmer R."/>
            <person name="Haas R."/>
        </authorList>
    </citation>
    <scope>NUCLEOTIDE SEQUENCE [LARGE SCALE GENOMIC DNA]</scope>
    <source>
        <strain>P12</strain>
    </source>
</reference>
<accession>B6JKE4</accession>
<comment type="function">
    <text evidence="1">Catalyzes the hydrolysis of N-succinyl-L,L-diaminopimelic acid (SDAP), forming succinate and LL-2,6-diaminopimelate (DAP), an intermediate involved in the bacterial biosynthesis of lysine and meso-diaminopimelic acid, an essential component of bacterial cell walls.</text>
</comment>
<comment type="catalytic activity">
    <reaction evidence="1">
        <text>N-succinyl-(2S,6S)-2,6-diaminopimelate + H2O = (2S,6S)-2,6-diaminopimelate + succinate</text>
        <dbReference type="Rhea" id="RHEA:22608"/>
        <dbReference type="ChEBI" id="CHEBI:15377"/>
        <dbReference type="ChEBI" id="CHEBI:30031"/>
        <dbReference type="ChEBI" id="CHEBI:57609"/>
        <dbReference type="ChEBI" id="CHEBI:58087"/>
        <dbReference type="EC" id="3.5.1.18"/>
    </reaction>
</comment>
<comment type="cofactor">
    <cofactor evidence="1">
        <name>Zn(2+)</name>
        <dbReference type="ChEBI" id="CHEBI:29105"/>
    </cofactor>
    <cofactor evidence="1">
        <name>Co(2+)</name>
        <dbReference type="ChEBI" id="CHEBI:48828"/>
    </cofactor>
    <text evidence="1">Binds 2 Zn(2+) or Co(2+) ions per subunit.</text>
</comment>
<comment type="pathway">
    <text evidence="1">Amino-acid biosynthesis; L-lysine biosynthesis via DAP pathway; LL-2,6-diaminopimelate from (S)-tetrahydrodipicolinate (succinylase route): step 3/3.</text>
</comment>
<comment type="subunit">
    <text evidence="1">Homodimer.</text>
</comment>
<comment type="similarity">
    <text evidence="1">Belongs to the peptidase M20A family. DapE subfamily.</text>
</comment>
<proteinExistence type="inferred from homology"/>
<sequence length="383" mass="42085">MDALEITQKLISYPTITPKECGIFEYIKSLFPTFKTLECGENGVKNLFLYRIFNPPKEHIKGKHAKENVKPLHFCFAGHIDVVPPGDNWQSDPFKPIIKEGFLYGRGAQDMKGGVGAFLSASLNFNPKTPFLLSMLLTSDEEGPGIFGTKLMLEKLKEKDLLPHMAIVAEPTCEKVLGDSIKIGRRGSINGKLILKGVQGHVAYPKKCQNPIDTLASVLPLISGVHLDDGDECFDPSKLVITNLHAGLGANNVTPASVEIIFNARHSLKTTKESLKEYLEKVLKDLPHTLELESSSSPFITASHSKLTSVLKENILKTCRTTPLLNTKGGTSDARFFSAHGIEVVEFGAINDRIHAIDERVSLKELELLEKVFLGVLEGLSEA</sequence>
<gene>
    <name evidence="1" type="primary">dapE</name>
    <name type="ordered locus">HPP12_0213</name>
</gene>
<keyword id="KW-0028">Amino-acid biosynthesis</keyword>
<keyword id="KW-0170">Cobalt</keyword>
<keyword id="KW-0220">Diaminopimelate biosynthesis</keyword>
<keyword id="KW-0378">Hydrolase</keyword>
<keyword id="KW-0457">Lysine biosynthesis</keyword>
<keyword id="KW-0479">Metal-binding</keyword>
<keyword id="KW-0862">Zinc</keyword>
<organism>
    <name type="scientific">Helicobacter pylori (strain P12)</name>
    <dbReference type="NCBI Taxonomy" id="570508"/>
    <lineage>
        <taxon>Bacteria</taxon>
        <taxon>Pseudomonadati</taxon>
        <taxon>Campylobacterota</taxon>
        <taxon>Epsilonproteobacteria</taxon>
        <taxon>Campylobacterales</taxon>
        <taxon>Helicobacteraceae</taxon>
        <taxon>Helicobacter</taxon>
    </lineage>
</organism>
<feature type="chain" id="PRO_0000375589" description="Succinyl-diaminopimelate desuccinylase">
    <location>
        <begin position="1"/>
        <end position="383"/>
    </location>
</feature>
<feature type="active site" evidence="1">
    <location>
        <position position="81"/>
    </location>
</feature>
<feature type="active site" description="Proton acceptor" evidence="1">
    <location>
        <position position="141"/>
    </location>
</feature>
<feature type="binding site" evidence="1">
    <location>
        <position position="79"/>
    </location>
    <ligand>
        <name>Zn(2+)</name>
        <dbReference type="ChEBI" id="CHEBI:29105"/>
        <label>1</label>
    </ligand>
</feature>
<feature type="binding site" evidence="1">
    <location>
        <position position="110"/>
    </location>
    <ligand>
        <name>Zn(2+)</name>
        <dbReference type="ChEBI" id="CHEBI:29105"/>
        <label>1</label>
    </ligand>
</feature>
<feature type="binding site" evidence="1">
    <location>
        <position position="110"/>
    </location>
    <ligand>
        <name>Zn(2+)</name>
        <dbReference type="ChEBI" id="CHEBI:29105"/>
        <label>2</label>
    </ligand>
</feature>
<feature type="binding site" evidence="1">
    <location>
        <position position="142"/>
    </location>
    <ligand>
        <name>Zn(2+)</name>
        <dbReference type="ChEBI" id="CHEBI:29105"/>
        <label>2</label>
    </ligand>
</feature>
<feature type="binding site" evidence="1">
    <location>
        <position position="170"/>
    </location>
    <ligand>
        <name>Zn(2+)</name>
        <dbReference type="ChEBI" id="CHEBI:29105"/>
        <label>1</label>
    </ligand>
</feature>
<feature type="binding site" evidence="1">
    <location>
        <position position="355"/>
    </location>
    <ligand>
        <name>Zn(2+)</name>
        <dbReference type="ChEBI" id="CHEBI:29105"/>
        <label>2</label>
    </ligand>
</feature>